<evidence type="ECO:0000255" key="1">
    <source>
        <dbReference type="HAMAP-Rule" id="MF_00033"/>
    </source>
</evidence>
<protein>
    <recommendedName>
        <fullName evidence="1">UDP-N-acetylglucosamine--N-acetylmuramyl-(pentapeptide) pyrophosphoryl-undecaprenol N-acetylglucosamine transferase</fullName>
        <ecNumber evidence="1">2.4.1.227</ecNumber>
    </recommendedName>
    <alternativeName>
        <fullName evidence="1">Undecaprenyl-PP-MurNAc-pentapeptide-UDPGlcNAc GlcNAc transferase</fullName>
    </alternativeName>
</protein>
<name>MURG_CLONN</name>
<comment type="function">
    <text evidence="1">Cell wall formation. Catalyzes the transfer of a GlcNAc subunit on undecaprenyl-pyrophosphoryl-MurNAc-pentapeptide (lipid intermediate I) to form undecaprenyl-pyrophosphoryl-MurNAc-(pentapeptide)GlcNAc (lipid intermediate II).</text>
</comment>
<comment type="catalytic activity">
    <reaction evidence="1">
        <text>di-trans,octa-cis-undecaprenyl diphospho-N-acetyl-alpha-D-muramoyl-L-alanyl-D-glutamyl-meso-2,6-diaminopimeloyl-D-alanyl-D-alanine + UDP-N-acetyl-alpha-D-glucosamine = di-trans,octa-cis-undecaprenyl diphospho-[N-acetyl-alpha-D-glucosaminyl-(1-&gt;4)]-N-acetyl-alpha-D-muramoyl-L-alanyl-D-glutamyl-meso-2,6-diaminopimeloyl-D-alanyl-D-alanine + UDP + H(+)</text>
        <dbReference type="Rhea" id="RHEA:31227"/>
        <dbReference type="ChEBI" id="CHEBI:15378"/>
        <dbReference type="ChEBI" id="CHEBI:57705"/>
        <dbReference type="ChEBI" id="CHEBI:58223"/>
        <dbReference type="ChEBI" id="CHEBI:61387"/>
        <dbReference type="ChEBI" id="CHEBI:61388"/>
        <dbReference type="EC" id="2.4.1.227"/>
    </reaction>
</comment>
<comment type="pathway">
    <text evidence="1">Cell wall biogenesis; peptidoglycan biosynthesis.</text>
</comment>
<comment type="subcellular location">
    <subcellularLocation>
        <location evidence="1">Cell membrane</location>
        <topology evidence="1">Peripheral membrane protein</topology>
        <orientation evidence="1">Cytoplasmic side</orientation>
    </subcellularLocation>
</comment>
<comment type="similarity">
    <text evidence="1">Belongs to the glycosyltransferase 28 family. MurG subfamily.</text>
</comment>
<feature type="chain" id="PRO_1000002636" description="UDP-N-acetylglucosamine--N-acetylmuramyl-(pentapeptide) pyrophosphoryl-undecaprenol N-acetylglucosamine transferase">
    <location>
        <begin position="1"/>
        <end position="357"/>
    </location>
</feature>
<feature type="binding site" evidence="1">
    <location>
        <begin position="13"/>
        <end position="15"/>
    </location>
    <ligand>
        <name>UDP-N-acetyl-alpha-D-glucosamine</name>
        <dbReference type="ChEBI" id="CHEBI:57705"/>
    </ligand>
</feature>
<feature type="binding site" evidence="1">
    <location>
        <position position="166"/>
    </location>
    <ligand>
        <name>UDP-N-acetyl-alpha-D-glucosamine</name>
        <dbReference type="ChEBI" id="CHEBI:57705"/>
    </ligand>
</feature>
<feature type="binding site" evidence="1">
    <location>
        <position position="197"/>
    </location>
    <ligand>
        <name>UDP-N-acetyl-alpha-D-glucosamine</name>
        <dbReference type="ChEBI" id="CHEBI:57705"/>
    </ligand>
</feature>
<feature type="binding site" evidence="1">
    <location>
        <position position="292"/>
    </location>
    <ligand>
        <name>UDP-N-acetyl-alpha-D-glucosamine</name>
        <dbReference type="ChEBI" id="CHEBI:57705"/>
    </ligand>
</feature>
<organism>
    <name type="scientific">Clostridium novyi (strain NT)</name>
    <dbReference type="NCBI Taxonomy" id="386415"/>
    <lineage>
        <taxon>Bacteria</taxon>
        <taxon>Bacillati</taxon>
        <taxon>Bacillota</taxon>
        <taxon>Clostridia</taxon>
        <taxon>Eubacteriales</taxon>
        <taxon>Clostridiaceae</taxon>
        <taxon>Clostridium</taxon>
    </lineage>
</organism>
<keyword id="KW-0131">Cell cycle</keyword>
<keyword id="KW-0132">Cell division</keyword>
<keyword id="KW-1003">Cell membrane</keyword>
<keyword id="KW-0133">Cell shape</keyword>
<keyword id="KW-0961">Cell wall biogenesis/degradation</keyword>
<keyword id="KW-0328">Glycosyltransferase</keyword>
<keyword id="KW-0472">Membrane</keyword>
<keyword id="KW-0573">Peptidoglycan synthesis</keyword>
<keyword id="KW-1185">Reference proteome</keyword>
<keyword id="KW-0808">Transferase</keyword>
<gene>
    <name evidence="1" type="primary">murG</name>
    <name type="ordered locus">NT01CX_2311</name>
</gene>
<reference key="1">
    <citation type="journal article" date="2006" name="Nat. Biotechnol.">
        <title>The genome and transcriptomes of the anti-tumor agent Clostridium novyi-NT.</title>
        <authorList>
            <person name="Bettegowda C."/>
            <person name="Huang X."/>
            <person name="Lin J."/>
            <person name="Cheong I."/>
            <person name="Kohli M."/>
            <person name="Szabo S.A."/>
            <person name="Zhang X."/>
            <person name="Diaz L.A. Jr."/>
            <person name="Velculescu V.E."/>
            <person name="Parmigiani G."/>
            <person name="Kinzler K.W."/>
            <person name="Vogelstein B."/>
            <person name="Zhou S."/>
        </authorList>
    </citation>
    <scope>NUCLEOTIDE SEQUENCE [LARGE SCALE GENOMIC DNA]</scope>
    <source>
        <strain>NT</strain>
    </source>
</reference>
<proteinExistence type="inferred from homology"/>
<accession>A0Q182</accession>
<dbReference type="EC" id="2.4.1.227" evidence="1"/>
<dbReference type="EMBL" id="CP000382">
    <property type="protein sequence ID" value="ABK62121.1"/>
    <property type="molecule type" value="Genomic_DNA"/>
</dbReference>
<dbReference type="RefSeq" id="WP_011722380.1">
    <property type="nucleotide sequence ID" value="NC_008593.1"/>
</dbReference>
<dbReference type="SMR" id="A0Q182"/>
<dbReference type="STRING" id="386415.NT01CX_2311"/>
<dbReference type="CAZy" id="GT28">
    <property type="family name" value="Glycosyltransferase Family 28"/>
</dbReference>
<dbReference type="KEGG" id="cno:NT01CX_2311"/>
<dbReference type="eggNOG" id="COG0707">
    <property type="taxonomic scope" value="Bacteria"/>
</dbReference>
<dbReference type="HOGENOM" id="CLU_037404_0_0_9"/>
<dbReference type="UniPathway" id="UPA00219"/>
<dbReference type="Proteomes" id="UP000008220">
    <property type="component" value="Chromosome"/>
</dbReference>
<dbReference type="GO" id="GO:0005886">
    <property type="term" value="C:plasma membrane"/>
    <property type="evidence" value="ECO:0007669"/>
    <property type="project" value="UniProtKB-SubCell"/>
</dbReference>
<dbReference type="GO" id="GO:0051991">
    <property type="term" value="F:UDP-N-acetyl-D-glucosamine:N-acetylmuramoyl-L-alanyl-D-glutamyl-meso-2,6-diaminopimelyl-D-alanyl-D-alanine-diphosphoundecaprenol 4-beta-N-acetylglucosaminlytransferase activity"/>
    <property type="evidence" value="ECO:0007669"/>
    <property type="project" value="RHEA"/>
</dbReference>
<dbReference type="GO" id="GO:0050511">
    <property type="term" value="F:undecaprenyldiphospho-muramoylpentapeptide beta-N-acetylglucosaminyltransferase activity"/>
    <property type="evidence" value="ECO:0007669"/>
    <property type="project" value="UniProtKB-UniRule"/>
</dbReference>
<dbReference type="GO" id="GO:0005975">
    <property type="term" value="P:carbohydrate metabolic process"/>
    <property type="evidence" value="ECO:0007669"/>
    <property type="project" value="InterPro"/>
</dbReference>
<dbReference type="GO" id="GO:0051301">
    <property type="term" value="P:cell division"/>
    <property type="evidence" value="ECO:0007669"/>
    <property type="project" value="UniProtKB-KW"/>
</dbReference>
<dbReference type="GO" id="GO:0071555">
    <property type="term" value="P:cell wall organization"/>
    <property type="evidence" value="ECO:0007669"/>
    <property type="project" value="UniProtKB-KW"/>
</dbReference>
<dbReference type="GO" id="GO:0030259">
    <property type="term" value="P:lipid glycosylation"/>
    <property type="evidence" value="ECO:0007669"/>
    <property type="project" value="UniProtKB-UniRule"/>
</dbReference>
<dbReference type="GO" id="GO:0009252">
    <property type="term" value="P:peptidoglycan biosynthetic process"/>
    <property type="evidence" value="ECO:0007669"/>
    <property type="project" value="UniProtKB-UniRule"/>
</dbReference>
<dbReference type="GO" id="GO:0008360">
    <property type="term" value="P:regulation of cell shape"/>
    <property type="evidence" value="ECO:0007669"/>
    <property type="project" value="UniProtKB-KW"/>
</dbReference>
<dbReference type="CDD" id="cd03785">
    <property type="entry name" value="GT28_MurG"/>
    <property type="match status" value="1"/>
</dbReference>
<dbReference type="Gene3D" id="3.40.50.2000">
    <property type="entry name" value="Glycogen Phosphorylase B"/>
    <property type="match status" value="2"/>
</dbReference>
<dbReference type="HAMAP" id="MF_00033">
    <property type="entry name" value="MurG"/>
    <property type="match status" value="1"/>
</dbReference>
<dbReference type="InterPro" id="IPR006009">
    <property type="entry name" value="GlcNAc_MurG"/>
</dbReference>
<dbReference type="InterPro" id="IPR007235">
    <property type="entry name" value="Glyco_trans_28_C"/>
</dbReference>
<dbReference type="InterPro" id="IPR004276">
    <property type="entry name" value="GlycoTrans_28_N"/>
</dbReference>
<dbReference type="NCBIfam" id="TIGR01133">
    <property type="entry name" value="murG"/>
    <property type="match status" value="1"/>
</dbReference>
<dbReference type="NCBIfam" id="NF009102">
    <property type="entry name" value="PRK12446.1"/>
    <property type="match status" value="1"/>
</dbReference>
<dbReference type="PANTHER" id="PTHR21015:SF27">
    <property type="entry name" value="UDP-N-ACETYLGLUCOSAMINE--N-ACETYLMURAMYL-(PENTAPEPTIDE) PYROPHOSPHORYL-UNDECAPRENOL N-ACETYLGLUCOSAMINE TRANSFERASE"/>
    <property type="match status" value="1"/>
</dbReference>
<dbReference type="PANTHER" id="PTHR21015">
    <property type="entry name" value="UDP-N-ACETYLGLUCOSAMINE--N-ACETYLMURAMYL-(PENTAPEPTIDE) PYROPHOSPHORYL-UNDECAPRENOL N-ACETYLGLUCOSAMINE TRANSFERASE 1"/>
    <property type="match status" value="1"/>
</dbReference>
<dbReference type="Pfam" id="PF04101">
    <property type="entry name" value="Glyco_tran_28_C"/>
    <property type="match status" value="1"/>
</dbReference>
<dbReference type="Pfam" id="PF03033">
    <property type="entry name" value="Glyco_transf_28"/>
    <property type="match status" value="1"/>
</dbReference>
<dbReference type="SUPFAM" id="SSF53756">
    <property type="entry name" value="UDP-Glycosyltransferase/glycogen phosphorylase"/>
    <property type="match status" value="1"/>
</dbReference>
<sequence length="357" mass="39804">MSKYKIIMTGGGSAGHVTPNLALVPKLKELGYEIQYIGTENGIERKIIESENIKYHIISSGKLRRYFDIKNFSDPFKVLKGVFEAKKIIKREKPNIVFSKGGFVSVPVVIGARLNRIPVISHESDMTPGLANKLAAPFCNKVCVTFPETLKYIKDNKGVLTGTPIREELFKGSKIKGYEICKFKDTTKPVLMIIGGSLGSKVINKSVRDALSNLIKKYNIIHICGKGNLDESLQNVEGYVQFDYVKDELPHLMATADLFISRAGANVIFELLALKKPNLLVPLSAKASRGDQILNAKSFEKSGYSMVIEEESLNSEVITNKIDELFKEKQKYIKNMNSSSANNCVDKIISLIEKYKK</sequence>